<gene>
    <name evidence="1" type="primary">glyA</name>
    <name type="ordered locus">SUN_0477</name>
</gene>
<dbReference type="EC" id="2.1.2.1" evidence="1"/>
<dbReference type="EMBL" id="AP009179">
    <property type="protein sequence ID" value="BAF71437.1"/>
    <property type="molecule type" value="Genomic_DNA"/>
</dbReference>
<dbReference type="RefSeq" id="WP_011980170.1">
    <property type="nucleotide sequence ID" value="NC_009663.1"/>
</dbReference>
<dbReference type="SMR" id="A6Q7H8"/>
<dbReference type="STRING" id="387093.SUN_0477"/>
<dbReference type="KEGG" id="sun:SUN_0477"/>
<dbReference type="eggNOG" id="COG0112">
    <property type="taxonomic scope" value="Bacteria"/>
</dbReference>
<dbReference type="HOGENOM" id="CLU_022477_2_1_7"/>
<dbReference type="OrthoDB" id="9803846at2"/>
<dbReference type="UniPathway" id="UPA00193"/>
<dbReference type="UniPathway" id="UPA00288">
    <property type="reaction ID" value="UER01023"/>
</dbReference>
<dbReference type="Proteomes" id="UP000006378">
    <property type="component" value="Chromosome"/>
</dbReference>
<dbReference type="GO" id="GO:0005829">
    <property type="term" value="C:cytosol"/>
    <property type="evidence" value="ECO:0007669"/>
    <property type="project" value="TreeGrafter"/>
</dbReference>
<dbReference type="GO" id="GO:0004372">
    <property type="term" value="F:glycine hydroxymethyltransferase activity"/>
    <property type="evidence" value="ECO:0007669"/>
    <property type="project" value="UniProtKB-UniRule"/>
</dbReference>
<dbReference type="GO" id="GO:0030170">
    <property type="term" value="F:pyridoxal phosphate binding"/>
    <property type="evidence" value="ECO:0007669"/>
    <property type="project" value="UniProtKB-UniRule"/>
</dbReference>
<dbReference type="GO" id="GO:0019264">
    <property type="term" value="P:glycine biosynthetic process from serine"/>
    <property type="evidence" value="ECO:0007669"/>
    <property type="project" value="UniProtKB-UniRule"/>
</dbReference>
<dbReference type="GO" id="GO:0035999">
    <property type="term" value="P:tetrahydrofolate interconversion"/>
    <property type="evidence" value="ECO:0007669"/>
    <property type="project" value="UniProtKB-UniRule"/>
</dbReference>
<dbReference type="CDD" id="cd00378">
    <property type="entry name" value="SHMT"/>
    <property type="match status" value="1"/>
</dbReference>
<dbReference type="FunFam" id="3.40.640.10:FF:000001">
    <property type="entry name" value="Serine hydroxymethyltransferase"/>
    <property type="match status" value="1"/>
</dbReference>
<dbReference type="Gene3D" id="3.90.1150.10">
    <property type="entry name" value="Aspartate Aminotransferase, domain 1"/>
    <property type="match status" value="1"/>
</dbReference>
<dbReference type="Gene3D" id="3.40.640.10">
    <property type="entry name" value="Type I PLP-dependent aspartate aminotransferase-like (Major domain)"/>
    <property type="match status" value="1"/>
</dbReference>
<dbReference type="HAMAP" id="MF_00051">
    <property type="entry name" value="SHMT"/>
    <property type="match status" value="1"/>
</dbReference>
<dbReference type="InterPro" id="IPR015424">
    <property type="entry name" value="PyrdxlP-dep_Trfase"/>
</dbReference>
<dbReference type="InterPro" id="IPR015421">
    <property type="entry name" value="PyrdxlP-dep_Trfase_major"/>
</dbReference>
<dbReference type="InterPro" id="IPR015422">
    <property type="entry name" value="PyrdxlP-dep_Trfase_small"/>
</dbReference>
<dbReference type="InterPro" id="IPR001085">
    <property type="entry name" value="Ser_HO-MeTrfase"/>
</dbReference>
<dbReference type="InterPro" id="IPR049943">
    <property type="entry name" value="Ser_HO-MeTrfase-like"/>
</dbReference>
<dbReference type="InterPro" id="IPR019798">
    <property type="entry name" value="Ser_HO-MeTrfase_PLP_BS"/>
</dbReference>
<dbReference type="InterPro" id="IPR039429">
    <property type="entry name" value="SHMT-like_dom"/>
</dbReference>
<dbReference type="NCBIfam" id="NF000586">
    <property type="entry name" value="PRK00011.1"/>
    <property type="match status" value="1"/>
</dbReference>
<dbReference type="PANTHER" id="PTHR11680">
    <property type="entry name" value="SERINE HYDROXYMETHYLTRANSFERASE"/>
    <property type="match status" value="1"/>
</dbReference>
<dbReference type="PANTHER" id="PTHR11680:SF50">
    <property type="entry name" value="SERINE HYDROXYMETHYLTRANSFERASE"/>
    <property type="match status" value="1"/>
</dbReference>
<dbReference type="Pfam" id="PF00464">
    <property type="entry name" value="SHMT"/>
    <property type="match status" value="1"/>
</dbReference>
<dbReference type="PIRSF" id="PIRSF000412">
    <property type="entry name" value="SHMT"/>
    <property type="match status" value="1"/>
</dbReference>
<dbReference type="SUPFAM" id="SSF53383">
    <property type="entry name" value="PLP-dependent transferases"/>
    <property type="match status" value="1"/>
</dbReference>
<dbReference type="PROSITE" id="PS00096">
    <property type="entry name" value="SHMT"/>
    <property type="match status" value="1"/>
</dbReference>
<keyword id="KW-0028">Amino-acid biosynthesis</keyword>
<keyword id="KW-0963">Cytoplasm</keyword>
<keyword id="KW-0554">One-carbon metabolism</keyword>
<keyword id="KW-0663">Pyridoxal phosphate</keyword>
<keyword id="KW-0808">Transferase</keyword>
<comment type="function">
    <text evidence="1">Catalyzes the reversible interconversion of serine and glycine with tetrahydrofolate (THF) serving as the one-carbon carrier. This reaction serves as the major source of one-carbon groups required for the biosynthesis of purines, thymidylate, methionine, and other important biomolecules. Also exhibits THF-independent aldolase activity toward beta-hydroxyamino acids, producing glycine and aldehydes, via a retro-aldol mechanism.</text>
</comment>
<comment type="catalytic activity">
    <reaction evidence="1">
        <text>(6R)-5,10-methylene-5,6,7,8-tetrahydrofolate + glycine + H2O = (6S)-5,6,7,8-tetrahydrofolate + L-serine</text>
        <dbReference type="Rhea" id="RHEA:15481"/>
        <dbReference type="ChEBI" id="CHEBI:15377"/>
        <dbReference type="ChEBI" id="CHEBI:15636"/>
        <dbReference type="ChEBI" id="CHEBI:33384"/>
        <dbReference type="ChEBI" id="CHEBI:57305"/>
        <dbReference type="ChEBI" id="CHEBI:57453"/>
        <dbReference type="EC" id="2.1.2.1"/>
    </reaction>
</comment>
<comment type="cofactor">
    <cofactor evidence="1">
        <name>pyridoxal 5'-phosphate</name>
        <dbReference type="ChEBI" id="CHEBI:597326"/>
    </cofactor>
</comment>
<comment type="pathway">
    <text evidence="1">One-carbon metabolism; tetrahydrofolate interconversion.</text>
</comment>
<comment type="pathway">
    <text evidence="1">Amino-acid biosynthesis; glycine biosynthesis; glycine from L-serine: step 1/1.</text>
</comment>
<comment type="subunit">
    <text evidence="1">Homodimer.</text>
</comment>
<comment type="subcellular location">
    <subcellularLocation>
        <location evidence="1">Cytoplasm</location>
    </subcellularLocation>
</comment>
<comment type="similarity">
    <text evidence="1">Belongs to the SHMT family.</text>
</comment>
<protein>
    <recommendedName>
        <fullName evidence="1">Serine hydroxymethyltransferase</fullName>
        <shortName evidence="1">SHMT</shortName>
        <shortName evidence="1">Serine methylase</shortName>
        <ecNumber evidence="1">2.1.2.1</ecNumber>
    </recommendedName>
</protein>
<proteinExistence type="inferred from homology"/>
<feature type="chain" id="PRO_1000006336" description="Serine hydroxymethyltransferase">
    <location>
        <begin position="1"/>
        <end position="416"/>
    </location>
</feature>
<feature type="binding site" evidence="1">
    <location>
        <position position="118"/>
    </location>
    <ligand>
        <name>(6S)-5,6,7,8-tetrahydrofolate</name>
        <dbReference type="ChEBI" id="CHEBI:57453"/>
    </ligand>
</feature>
<feature type="binding site" evidence="1">
    <location>
        <begin position="122"/>
        <end position="124"/>
    </location>
    <ligand>
        <name>(6S)-5,6,7,8-tetrahydrofolate</name>
        <dbReference type="ChEBI" id="CHEBI:57453"/>
    </ligand>
</feature>
<feature type="binding site" evidence="1">
    <location>
        <begin position="350"/>
        <end position="352"/>
    </location>
    <ligand>
        <name>(6S)-5,6,7,8-tetrahydrofolate</name>
        <dbReference type="ChEBI" id="CHEBI:57453"/>
    </ligand>
</feature>
<feature type="site" description="Plays an important role in substrate specificity" evidence="1">
    <location>
        <position position="225"/>
    </location>
</feature>
<feature type="modified residue" description="N6-(pyridoxal phosphate)lysine" evidence="1">
    <location>
        <position position="226"/>
    </location>
</feature>
<sequence>MSYAIETFDPEIFQAIENERERQTNHLEMIASENFTIPAVMEAMGSVFTNKYAEGYPHKRYYGGCEYADVVEQLAIDRACELFDCNYANVQPHSGSQANGAVYAALIKAGDKILGMDLSHGGHLTHGSKPSFSGKNYHSFTYGVELDGRINYDRVMEIAKIVQPKIIVCGASAYAREIDFKKFREIADEVGAILFADIAHIAGLVCAGEHPSPFPYADVVTTTTHKTLAGPRGGMIMTNDEDIAKKINSAIFPGLQGGPLVHVIAAKAVGFKHNLSDEWKVYAKQVKANASILADVLIKRGYDVVSGGTDNHLVLVSFLDKEFSGKDADAALGAAGITVNKNTVPGETRSPFVTSGIRIGSPALTSRGMKEIEFEIIANKIADVLDNVNDSELHAKIKEEMKELASNFVIYDKPIY</sequence>
<organism>
    <name type="scientific">Sulfurovum sp. (strain NBC37-1)</name>
    <dbReference type="NCBI Taxonomy" id="387093"/>
    <lineage>
        <taxon>Bacteria</taxon>
        <taxon>Pseudomonadati</taxon>
        <taxon>Campylobacterota</taxon>
        <taxon>Epsilonproteobacteria</taxon>
        <taxon>Campylobacterales</taxon>
        <taxon>Sulfurovaceae</taxon>
        <taxon>Sulfurovum</taxon>
    </lineage>
</organism>
<evidence type="ECO:0000255" key="1">
    <source>
        <dbReference type="HAMAP-Rule" id="MF_00051"/>
    </source>
</evidence>
<name>GLYA_SULNB</name>
<reference key="1">
    <citation type="journal article" date="2007" name="Proc. Natl. Acad. Sci. U.S.A.">
        <title>Deep-sea vent epsilon-proteobacterial genomes provide insights into emergence of pathogens.</title>
        <authorList>
            <person name="Nakagawa S."/>
            <person name="Takaki Y."/>
            <person name="Shimamura S."/>
            <person name="Reysenbach A.-L."/>
            <person name="Takai K."/>
            <person name="Horikoshi K."/>
        </authorList>
    </citation>
    <scope>NUCLEOTIDE SEQUENCE [LARGE SCALE GENOMIC DNA]</scope>
    <source>
        <strain>NBC37-1</strain>
    </source>
</reference>
<accession>A6Q7H8</accession>